<keyword id="KW-0249">Electron transport</keyword>
<keyword id="KW-0472">Membrane</keyword>
<keyword id="KW-0496">Mitochondrion</keyword>
<keyword id="KW-0999">Mitochondrion inner membrane</keyword>
<keyword id="KW-1185">Reference proteome</keyword>
<keyword id="KW-0679">Respiratory chain</keyword>
<keyword id="KW-0812">Transmembrane</keyword>
<keyword id="KW-1133">Transmembrane helix</keyword>
<keyword id="KW-0813">Transport</keyword>
<gene>
    <name type="primary">qcr9</name>
    <name type="ORF">NCU03233</name>
</gene>
<organism>
    <name type="scientific">Neurospora crassa (strain ATCC 24698 / 74-OR23-1A / CBS 708.71 / DSM 1257 / FGSC 987)</name>
    <dbReference type="NCBI Taxonomy" id="367110"/>
    <lineage>
        <taxon>Eukaryota</taxon>
        <taxon>Fungi</taxon>
        <taxon>Dikarya</taxon>
        <taxon>Ascomycota</taxon>
        <taxon>Pezizomycotina</taxon>
        <taxon>Sordariomycetes</taxon>
        <taxon>Sordariomycetidae</taxon>
        <taxon>Sordariales</taxon>
        <taxon>Sordariaceae</taxon>
        <taxon>Neurospora</taxon>
    </lineage>
</organism>
<evidence type="ECO:0000250" key="1">
    <source>
        <dbReference type="UniProtKB" id="P22289"/>
    </source>
</evidence>
<evidence type="ECO:0000269" key="2">
    <source>
    </source>
</evidence>
<evidence type="ECO:0000269" key="3">
    <source>
    </source>
</evidence>
<evidence type="ECO:0000269" key="4">
    <source>
    </source>
</evidence>
<evidence type="ECO:0000269" key="5">
    <source>
    </source>
</evidence>
<evidence type="ECO:0000269" key="6">
    <source>
    </source>
</evidence>
<evidence type="ECO:0000269" key="7">
    <source>
    </source>
</evidence>
<evidence type="ECO:0000303" key="8">
    <source>
    </source>
</evidence>
<evidence type="ECO:0000305" key="9"/>
<evidence type="ECO:0000305" key="10">
    <source>
    </source>
</evidence>
<evidence type="ECO:0000305" key="11">
    <source>
    </source>
</evidence>
<protein>
    <recommendedName>
        <fullName>Cytochrome b-c1 complex subunit 9, mitochondrial</fullName>
    </recommendedName>
    <alternativeName>
        <fullName>Complex III subunit 9</fullName>
    </alternativeName>
    <alternativeName>
        <fullName evidence="8">Complex III subunit IX</fullName>
    </alternativeName>
    <alternativeName>
        <fullName>Ubiquinol-cytochrome c oxidoreductase subunit 9</fullName>
    </alternativeName>
    <alternativeName>
        <fullName>Ubiquinol-cytochrome c reductase complex 8 kDa protein</fullName>
    </alternativeName>
</protein>
<comment type="function">
    <text evidence="5 10 11">Component of the ubiquinol-cytochrome c oxidoreductase, a multisubunit transmembrane complex that is part of the mitochondrial electron transport chain which drives oxidative phosphorylation. The respiratory chain contains 3 multisubunit complexes succinate dehydrogenase (complex II, CII), ubiquinol-cytochrome c oxidoreductase (cytochrome b-c1 complex, complex III, CIII) and cytochrome c oxidase (complex IV, CIV), that cooperate to transfer electrons derived from NADH and succinate to molecular oxygen, creating an electrochemical gradient over the inner membrane that drives transmembrane transport and the ATP synthase. The cytochrome b-c1 complex catalyzes electron transfer from ubiquinol to cytochrome c, linking this redox reaction to translocation of protons across the mitochondrial inner membrane, with protons being carried across the membrane as hydrogens on the quinol. In the process called Q cycle, 2 protons are consumed from the matrix, 4 protons are released into the intermembrane space and 2 electrons are passed to cytochrome c.</text>
</comment>
<comment type="subunit">
    <text evidence="2 3 4 6 7">Component of the ubiquinol-cytochrome c oxidoreductase (cytochrome b-c1 complex, complex III, CIII), a multisubunit enzyme composed of 10 subunits. The complex is composed of 3 respiratory subunits cytochrome b (cob), cytochrome c1 (cyt-1) and Rieske protein (fes-1), 2 core protein subunits pep and ucr-1, and 5 low-molecular weight protein subunits qcr6, qcr7, qcr8, qcr9 and probably NCU16844/qcr10 (PubMed:226365, PubMed:6273583, PubMed:6302289). The complex exists as an obligatory dimer and forms supercomplexes (SCs) in the inner mitochondrial membrane with NADH-ubiquinone oxidoreductase (complex I, CI) and cytochrome c oxidase (complex IV, CIV), resulting in different assemblies (supercomplexes SCI(1)III(2), SCIII(2)IV(1) and SCIII(2)IV(2) as well as higher order I(x)III(y)IV(z) megacomplexes) (PubMed:17873079, PubMed:19239619).</text>
</comment>
<comment type="subcellular location">
    <subcellularLocation>
        <location evidence="1">Mitochondrion inner membrane</location>
        <topology evidence="1">Single-pass membrane protein</topology>
    </subcellularLocation>
</comment>
<comment type="similarity">
    <text evidence="9">Belongs to the UQCR10/QCR9 family.</text>
</comment>
<sequence>MSALYNLIFRNNTAFVGAVFAGAFAFELAYDNGMDKVWDKINKGRQWKDIRHKYVEAEE</sequence>
<dbReference type="EMBL" id="CM002236">
    <property type="protein sequence ID" value="EAA36097.2"/>
    <property type="molecule type" value="Genomic_DNA"/>
</dbReference>
<dbReference type="RefSeq" id="XP_965333.2">
    <property type="nucleotide sequence ID" value="XM_960240.3"/>
</dbReference>
<dbReference type="SMR" id="Q7SGT7"/>
<dbReference type="FunCoup" id="Q7SGT7">
    <property type="interactions" value="287"/>
</dbReference>
<dbReference type="STRING" id="367110.Q7SGT7"/>
<dbReference type="PaxDb" id="5141-EFNCRP00000003023"/>
<dbReference type="EnsemblFungi" id="EAA36097">
    <property type="protein sequence ID" value="EAA36097"/>
    <property type="gene ID" value="NCU03233"/>
</dbReference>
<dbReference type="GeneID" id="3881482"/>
<dbReference type="KEGG" id="ncr:NCU03233"/>
<dbReference type="VEuPathDB" id="FungiDB:NCU03233"/>
<dbReference type="HOGENOM" id="CLU_171977_3_0_1"/>
<dbReference type="InParanoid" id="Q7SGT7"/>
<dbReference type="OMA" id="IKHKYEV"/>
<dbReference type="OrthoDB" id="44067at2759"/>
<dbReference type="Proteomes" id="UP000001805">
    <property type="component" value="Chromosome 1, Linkage Group I"/>
</dbReference>
<dbReference type="GO" id="GO:0005743">
    <property type="term" value="C:mitochondrial inner membrane"/>
    <property type="evidence" value="ECO:0007669"/>
    <property type="project" value="UniProtKB-SubCell"/>
</dbReference>
<dbReference type="GO" id="GO:0045275">
    <property type="term" value="C:respiratory chain complex III"/>
    <property type="evidence" value="ECO:0000318"/>
    <property type="project" value="GO_Central"/>
</dbReference>
<dbReference type="GO" id="GO:0006122">
    <property type="term" value="P:mitochondrial electron transport, ubiquinol to cytochrome c"/>
    <property type="evidence" value="ECO:0000318"/>
    <property type="project" value="GO_Central"/>
</dbReference>
<dbReference type="FunFam" id="1.20.5.260:FF:000001">
    <property type="entry name" value="Cytochrome b-c1 complex subunit 9"/>
    <property type="match status" value="1"/>
</dbReference>
<dbReference type="Gene3D" id="1.20.5.260">
    <property type="entry name" value="Cytochrome b-c1 complex subunit 9"/>
    <property type="match status" value="1"/>
</dbReference>
<dbReference type="InterPro" id="IPR008027">
    <property type="entry name" value="QCR9"/>
</dbReference>
<dbReference type="InterPro" id="IPR036656">
    <property type="entry name" value="QCR9_sf"/>
</dbReference>
<dbReference type="PANTHER" id="PTHR12980:SF0">
    <property type="entry name" value="CYTOCHROME B-C1 COMPLEX SUBUNIT 9"/>
    <property type="match status" value="1"/>
</dbReference>
<dbReference type="PANTHER" id="PTHR12980">
    <property type="entry name" value="UBIQUINOL-CYTOCHROME C REDUCTASE COMPLEX, SUBUNIT X"/>
    <property type="match status" value="1"/>
</dbReference>
<dbReference type="Pfam" id="PF05365">
    <property type="entry name" value="UCR_UQCRX_QCR9"/>
    <property type="match status" value="1"/>
</dbReference>
<dbReference type="SUPFAM" id="SSF81514">
    <property type="entry name" value="Subunit X (non-heme 7 kDa protein) of cytochrome bc1 complex (Ubiquinol-cytochrome c reductase)"/>
    <property type="match status" value="1"/>
</dbReference>
<name>QCR9_NEUCR</name>
<accession>Q7SGT7</accession>
<feature type="chain" id="PRO_0000449193" description="Cytochrome b-c1 complex subunit 9, mitochondrial">
    <location>
        <begin position="1"/>
        <end position="59"/>
    </location>
</feature>
<feature type="topological domain" description="Mitochondrial matrix" evidence="1">
    <location>
        <begin position="1"/>
        <end position="15"/>
    </location>
</feature>
<feature type="transmembrane region" description="Helical" evidence="1">
    <location>
        <begin position="16"/>
        <end position="41"/>
    </location>
</feature>
<feature type="topological domain" description="Mitochondrial intermembrane" evidence="1">
    <location>
        <begin position="42"/>
        <end position="59"/>
    </location>
</feature>
<reference key="1">
    <citation type="journal article" date="2003" name="Nature">
        <title>The genome sequence of the filamentous fungus Neurospora crassa.</title>
        <authorList>
            <person name="Galagan J.E."/>
            <person name="Calvo S.E."/>
            <person name="Borkovich K.A."/>
            <person name="Selker E.U."/>
            <person name="Read N.D."/>
            <person name="Jaffe D.B."/>
            <person name="FitzHugh W."/>
            <person name="Ma L.-J."/>
            <person name="Smirnov S."/>
            <person name="Purcell S."/>
            <person name="Rehman B."/>
            <person name="Elkins T."/>
            <person name="Engels R."/>
            <person name="Wang S."/>
            <person name="Nielsen C.B."/>
            <person name="Butler J."/>
            <person name="Endrizzi M."/>
            <person name="Qui D."/>
            <person name="Ianakiev P."/>
            <person name="Bell-Pedersen D."/>
            <person name="Nelson M.A."/>
            <person name="Werner-Washburne M."/>
            <person name="Selitrennikoff C.P."/>
            <person name="Kinsey J.A."/>
            <person name="Braun E.L."/>
            <person name="Zelter A."/>
            <person name="Schulte U."/>
            <person name="Kothe G.O."/>
            <person name="Jedd G."/>
            <person name="Mewes H.-W."/>
            <person name="Staben C."/>
            <person name="Marcotte E."/>
            <person name="Greenberg D."/>
            <person name="Roy A."/>
            <person name="Foley K."/>
            <person name="Naylor J."/>
            <person name="Stange-Thomann N."/>
            <person name="Barrett R."/>
            <person name="Gnerre S."/>
            <person name="Kamal M."/>
            <person name="Kamvysselis M."/>
            <person name="Mauceli E.W."/>
            <person name="Bielke C."/>
            <person name="Rudd S."/>
            <person name="Frishman D."/>
            <person name="Krystofova S."/>
            <person name="Rasmussen C."/>
            <person name="Metzenberg R.L."/>
            <person name="Perkins D.D."/>
            <person name="Kroken S."/>
            <person name="Cogoni C."/>
            <person name="Macino G."/>
            <person name="Catcheside D.E.A."/>
            <person name="Li W."/>
            <person name="Pratt R.J."/>
            <person name="Osmani S.A."/>
            <person name="DeSouza C.P.C."/>
            <person name="Glass N.L."/>
            <person name="Orbach M.J."/>
            <person name="Berglund J.A."/>
            <person name="Voelker R."/>
            <person name="Yarden O."/>
            <person name="Plamann M."/>
            <person name="Seiler S."/>
            <person name="Dunlap J.C."/>
            <person name="Radford A."/>
            <person name="Aramayo R."/>
            <person name="Natvig D.O."/>
            <person name="Alex L.A."/>
            <person name="Mannhaupt G."/>
            <person name="Ebbole D.J."/>
            <person name="Freitag M."/>
            <person name="Paulsen I."/>
            <person name="Sachs M.S."/>
            <person name="Lander E.S."/>
            <person name="Nusbaum C."/>
            <person name="Birren B.W."/>
        </authorList>
    </citation>
    <scope>NUCLEOTIDE SEQUENCE [LARGE SCALE GENOMIC DNA]</scope>
    <source>
        <strain>ATCC 24698 / 74-OR23-1A / CBS 708.71 / DSM 1257 / FGSC 987</strain>
    </source>
</reference>
<reference key="2">
    <citation type="journal article" date="1979" name="Eur. J. Biochem.">
        <title>Isolation of mitochondrial succinate: ubiquinone reductase, cytochrome c reductase and cytochrome c oxidase from Neurospora crassa using nonionic detergent.</title>
        <authorList>
            <person name="Weiss H."/>
            <person name="Kolb H.J."/>
        </authorList>
    </citation>
    <scope>SUBUNIT</scope>
    <scope>SUBCELLULAR LOCATION</scope>
</reference>
<reference key="3">
    <citation type="journal article" date="1981" name="J. Mol. Biol.">
        <title>Three-dimensional structure of ubiquinol:cytochrome c reductase from Neurospora mitochondria determined by electron microscopy of membrane crystals.</title>
        <authorList>
            <person name="Leonard K."/>
            <person name="Wingfield P."/>
            <person name="Arad T."/>
            <person name="Weiss H."/>
        </authorList>
    </citation>
    <scope>SUBUNIT</scope>
</reference>
<reference key="4">
    <citation type="journal article" date="1983" name="J. Mol. Biol.">
        <title>Structural studies of cytochrome reductase. Subunit topography determined by electron microscopy of membrane crystals of a subcomplex.</title>
        <authorList>
            <person name="Karlsson B."/>
            <person name="Hovmoeller S."/>
            <person name="Weiss H."/>
            <person name="Leonard K."/>
        </authorList>
    </citation>
    <scope>SUBUNIT</scope>
</reference>
<reference key="5">
    <citation type="journal article" date="1986" name="Eur. J. Biochem.">
        <title>Dimeric ubiquinol:cytochrome c reductase of Neurospora mitochondria contains one cooperative ubiquinone-reduction centre.</title>
        <authorList>
            <person name="Linke P."/>
            <person name="Bechmann G."/>
            <person name="Gothe A."/>
            <person name="Weiss H."/>
        </authorList>
    </citation>
    <scope>FUNCTION OF COMPLEX III</scope>
</reference>
<reference key="6">
    <citation type="journal article" date="1991" name="Eur. J. Biochem.">
        <title>Regulation of the proton/electron stoichiometry of mitochondrial ubiquinol:cytochrome c reductase by the membrane potential.</title>
        <authorList>
            <person name="Bechmann G."/>
            <person name="Weiss H."/>
        </authorList>
    </citation>
    <scope>FUNCTION OF COMPLEX III</scope>
</reference>
<reference key="7">
    <citation type="journal article" date="2007" name="Eukaryot. Cell">
        <title>Supramolecular organization of the respiratory chain in Neurospora crassa mitochondria.</title>
        <authorList>
            <person name="Marques I."/>
            <person name="Dencher N.A."/>
            <person name="Videira A."/>
            <person name="Krause F."/>
        </authorList>
    </citation>
    <scope>SUBUNIT</scope>
</reference>
<reference key="8">
    <citation type="journal article" date="2009" name="Mol. Microbiol.">
        <title>Effects of mitochondrial complex III disruption in the respiratory chain of Neurospora crassa.</title>
        <authorList>
            <person name="Duarte M."/>
            <person name="Videira A."/>
        </authorList>
    </citation>
    <scope>FUNCTION OF COMPLEX III</scope>
    <scope>SUBUNIT</scope>
</reference>
<proteinExistence type="evidence at protein level"/>